<organism>
    <name type="scientific">Pseudomonas fluorescens (strain SBW25)</name>
    <dbReference type="NCBI Taxonomy" id="216595"/>
    <lineage>
        <taxon>Bacteria</taxon>
        <taxon>Pseudomonadati</taxon>
        <taxon>Pseudomonadota</taxon>
        <taxon>Gammaproteobacteria</taxon>
        <taxon>Pseudomonadales</taxon>
        <taxon>Pseudomonadaceae</taxon>
        <taxon>Pseudomonas</taxon>
    </lineage>
</organism>
<name>PQQD_PSEFS</name>
<comment type="function">
    <text evidence="1">Functions as a PqqA binding protein and presents PqqA to PqqE, in the pyrroloquinoline quinone (PQQ) biosynthetic pathway.</text>
</comment>
<comment type="pathway">
    <text evidence="1">Cofactor biosynthesis; pyrroloquinoline quinone biosynthesis.</text>
</comment>
<comment type="subunit">
    <text evidence="1">Monomer. Interacts with PqqE.</text>
</comment>
<comment type="similarity">
    <text evidence="1">Belongs to the PqqD family.</text>
</comment>
<evidence type="ECO:0000255" key="1">
    <source>
        <dbReference type="HAMAP-Rule" id="MF_00655"/>
    </source>
</evidence>
<sequence length="91" mass="10334">MSFDRSRIPTWRQGYRYQYEPAQKGHVLLYPEGMIKLNDSAALIGGLIDGERDVAAIIAELDKQFPGVPELGEDIEQFMEVARAEHWITLA</sequence>
<reference key="1">
    <citation type="journal article" date="2009" name="Genome Biol.">
        <title>Genomic and genetic analyses of diversity and plant interactions of Pseudomonas fluorescens.</title>
        <authorList>
            <person name="Silby M.W."/>
            <person name="Cerdeno-Tarraga A.M."/>
            <person name="Vernikos G.S."/>
            <person name="Giddens S.R."/>
            <person name="Jackson R.W."/>
            <person name="Preston G.M."/>
            <person name="Zhang X.-X."/>
            <person name="Moon C.D."/>
            <person name="Gehrig S.M."/>
            <person name="Godfrey S.A.C."/>
            <person name="Knight C.G."/>
            <person name="Malone J.G."/>
            <person name="Robinson Z."/>
            <person name="Spiers A.J."/>
            <person name="Harris S."/>
            <person name="Challis G.L."/>
            <person name="Yaxley A.M."/>
            <person name="Harris D."/>
            <person name="Seeger K."/>
            <person name="Murphy L."/>
            <person name="Rutter S."/>
            <person name="Squares R."/>
            <person name="Quail M.A."/>
            <person name="Saunders E."/>
            <person name="Mavromatis K."/>
            <person name="Brettin T.S."/>
            <person name="Bentley S.D."/>
            <person name="Hothersall J."/>
            <person name="Stephens E."/>
            <person name="Thomas C.M."/>
            <person name="Parkhill J."/>
            <person name="Levy S.B."/>
            <person name="Rainey P.B."/>
            <person name="Thomson N.R."/>
        </authorList>
    </citation>
    <scope>NUCLEOTIDE SEQUENCE [LARGE SCALE GENOMIC DNA]</scope>
    <source>
        <strain>SBW25</strain>
    </source>
</reference>
<protein>
    <recommendedName>
        <fullName evidence="1">PqqA binding protein</fullName>
    </recommendedName>
    <alternativeName>
        <fullName evidence="1">Coenzyme PQQ synthesis protein D</fullName>
    </alternativeName>
    <alternativeName>
        <fullName evidence="1">Pyrroloquinoline quinone biosynthesis protein D</fullName>
    </alternativeName>
</protein>
<feature type="chain" id="PRO_1000212439" description="PqqA binding protein">
    <location>
        <begin position="1"/>
        <end position="91"/>
    </location>
</feature>
<gene>
    <name evidence="1" type="primary">pqqD</name>
    <name type="ordered locus">PFLU_5601</name>
</gene>
<dbReference type="EMBL" id="AM181176">
    <property type="protein sequence ID" value="CAY52887.1"/>
    <property type="molecule type" value="Genomic_DNA"/>
</dbReference>
<dbReference type="RefSeq" id="WP_015886196.1">
    <property type="nucleotide sequence ID" value="NC_012660.1"/>
</dbReference>
<dbReference type="SMR" id="C3K350"/>
<dbReference type="STRING" id="294.SRM1_05262"/>
<dbReference type="GeneID" id="93467233"/>
<dbReference type="eggNOG" id="ENOG5032Z81">
    <property type="taxonomic scope" value="Bacteria"/>
</dbReference>
<dbReference type="HOGENOM" id="CLU_163864_2_1_6"/>
<dbReference type="OrthoDB" id="7356791at2"/>
<dbReference type="UniPathway" id="UPA00539"/>
<dbReference type="GO" id="GO:0048038">
    <property type="term" value="F:quinone binding"/>
    <property type="evidence" value="ECO:0007669"/>
    <property type="project" value="InterPro"/>
</dbReference>
<dbReference type="GO" id="GO:0018189">
    <property type="term" value="P:pyrroloquinoline quinone biosynthetic process"/>
    <property type="evidence" value="ECO:0007669"/>
    <property type="project" value="UniProtKB-UniRule"/>
</dbReference>
<dbReference type="Gene3D" id="1.10.10.1150">
    <property type="entry name" value="Coenzyme PQQ synthesis protein D (PqqD)"/>
    <property type="match status" value="1"/>
</dbReference>
<dbReference type="HAMAP" id="MF_00655">
    <property type="entry name" value="PQQ_syn_PqqD"/>
    <property type="match status" value="1"/>
</dbReference>
<dbReference type="InterPro" id="IPR008792">
    <property type="entry name" value="PQQD"/>
</dbReference>
<dbReference type="InterPro" id="IPR022479">
    <property type="entry name" value="PqqD_bac"/>
</dbReference>
<dbReference type="InterPro" id="IPR041881">
    <property type="entry name" value="PqqD_sf"/>
</dbReference>
<dbReference type="NCBIfam" id="TIGR03859">
    <property type="entry name" value="PQQ_PqqD"/>
    <property type="match status" value="1"/>
</dbReference>
<dbReference type="NCBIfam" id="NF002535">
    <property type="entry name" value="PRK02079.1"/>
    <property type="match status" value="1"/>
</dbReference>
<dbReference type="Pfam" id="PF05402">
    <property type="entry name" value="PqqD"/>
    <property type="match status" value="1"/>
</dbReference>
<proteinExistence type="inferred from homology"/>
<keyword id="KW-0884">PQQ biosynthesis</keyword>
<accession>C3K350</accession>